<proteinExistence type="inferred from homology"/>
<organism>
    <name type="scientific">Shewanella frigidimarina (strain NCIMB 400)</name>
    <dbReference type="NCBI Taxonomy" id="318167"/>
    <lineage>
        <taxon>Bacteria</taxon>
        <taxon>Pseudomonadati</taxon>
        <taxon>Pseudomonadota</taxon>
        <taxon>Gammaproteobacteria</taxon>
        <taxon>Alteromonadales</taxon>
        <taxon>Shewanellaceae</taxon>
        <taxon>Shewanella</taxon>
    </lineage>
</organism>
<gene>
    <name evidence="1" type="primary">rpsJ</name>
    <name type="ordered locus">Sfri_0147</name>
</gene>
<protein>
    <recommendedName>
        <fullName evidence="1">Small ribosomal subunit protein uS10</fullName>
    </recommendedName>
    <alternativeName>
        <fullName evidence="2">30S ribosomal protein S10</fullName>
    </alternativeName>
</protein>
<evidence type="ECO:0000255" key="1">
    <source>
        <dbReference type="HAMAP-Rule" id="MF_00508"/>
    </source>
</evidence>
<evidence type="ECO:0000305" key="2"/>
<reference key="1">
    <citation type="submission" date="2006-08" db="EMBL/GenBank/DDBJ databases">
        <title>Complete sequence of Shewanella frigidimarina NCIMB 400.</title>
        <authorList>
            <consortium name="US DOE Joint Genome Institute"/>
            <person name="Copeland A."/>
            <person name="Lucas S."/>
            <person name="Lapidus A."/>
            <person name="Barry K."/>
            <person name="Detter J.C."/>
            <person name="Glavina del Rio T."/>
            <person name="Hammon N."/>
            <person name="Israni S."/>
            <person name="Dalin E."/>
            <person name="Tice H."/>
            <person name="Pitluck S."/>
            <person name="Fredrickson J.K."/>
            <person name="Kolker E."/>
            <person name="McCuel L.A."/>
            <person name="DiChristina T."/>
            <person name="Nealson K.H."/>
            <person name="Newman D."/>
            <person name="Tiedje J.M."/>
            <person name="Zhou J."/>
            <person name="Romine M.F."/>
            <person name="Culley D.E."/>
            <person name="Serres M."/>
            <person name="Chertkov O."/>
            <person name="Brettin T."/>
            <person name="Bruce D."/>
            <person name="Han C."/>
            <person name="Tapia R."/>
            <person name="Gilna P."/>
            <person name="Schmutz J."/>
            <person name="Larimer F."/>
            <person name="Land M."/>
            <person name="Hauser L."/>
            <person name="Kyrpides N."/>
            <person name="Mikhailova N."/>
            <person name="Richardson P."/>
        </authorList>
    </citation>
    <scope>NUCLEOTIDE SEQUENCE [LARGE SCALE GENOMIC DNA]</scope>
    <source>
        <strain>NCIMB 400</strain>
    </source>
</reference>
<comment type="function">
    <text evidence="1">Involved in the binding of tRNA to the ribosomes.</text>
</comment>
<comment type="subunit">
    <text evidence="1">Part of the 30S ribosomal subunit.</text>
</comment>
<comment type="similarity">
    <text evidence="1">Belongs to the universal ribosomal protein uS10 family.</text>
</comment>
<accession>Q089Q5</accession>
<keyword id="KW-1185">Reference proteome</keyword>
<keyword id="KW-0687">Ribonucleoprotein</keyword>
<keyword id="KW-0689">Ribosomal protein</keyword>
<feature type="chain" id="PRO_1000015110" description="Small ribosomal subunit protein uS10">
    <location>
        <begin position="1"/>
        <end position="103"/>
    </location>
</feature>
<sequence>MQNQRIRIRLKGFDHRLIDQSTAEIVETAKRTGAQVRGPIPLPTRKERYTVLISPHVNKDARDQYEIRTHKRLVDIVEPTEKTVDALMRLDLAAGVDVQISLG</sequence>
<name>RS10_SHEFN</name>
<dbReference type="EMBL" id="CP000447">
    <property type="protein sequence ID" value="ABI70010.1"/>
    <property type="molecule type" value="Genomic_DNA"/>
</dbReference>
<dbReference type="RefSeq" id="WP_011635639.1">
    <property type="nucleotide sequence ID" value="NC_008345.1"/>
</dbReference>
<dbReference type="SMR" id="Q089Q5"/>
<dbReference type="STRING" id="318167.Sfri_0147"/>
<dbReference type="GeneID" id="93807291"/>
<dbReference type="KEGG" id="sfr:Sfri_0147"/>
<dbReference type="eggNOG" id="COG0051">
    <property type="taxonomic scope" value="Bacteria"/>
</dbReference>
<dbReference type="HOGENOM" id="CLU_122625_1_3_6"/>
<dbReference type="OrthoDB" id="9804464at2"/>
<dbReference type="Proteomes" id="UP000000684">
    <property type="component" value="Chromosome"/>
</dbReference>
<dbReference type="GO" id="GO:1990904">
    <property type="term" value="C:ribonucleoprotein complex"/>
    <property type="evidence" value="ECO:0007669"/>
    <property type="project" value="UniProtKB-KW"/>
</dbReference>
<dbReference type="GO" id="GO:0005840">
    <property type="term" value="C:ribosome"/>
    <property type="evidence" value="ECO:0007669"/>
    <property type="project" value="UniProtKB-KW"/>
</dbReference>
<dbReference type="GO" id="GO:0003735">
    <property type="term" value="F:structural constituent of ribosome"/>
    <property type="evidence" value="ECO:0007669"/>
    <property type="project" value="InterPro"/>
</dbReference>
<dbReference type="GO" id="GO:0000049">
    <property type="term" value="F:tRNA binding"/>
    <property type="evidence" value="ECO:0007669"/>
    <property type="project" value="UniProtKB-UniRule"/>
</dbReference>
<dbReference type="GO" id="GO:0006412">
    <property type="term" value="P:translation"/>
    <property type="evidence" value="ECO:0007669"/>
    <property type="project" value="UniProtKB-UniRule"/>
</dbReference>
<dbReference type="FunFam" id="3.30.70.600:FF:000001">
    <property type="entry name" value="30S ribosomal protein S10"/>
    <property type="match status" value="1"/>
</dbReference>
<dbReference type="Gene3D" id="3.30.70.600">
    <property type="entry name" value="Ribosomal protein S10 domain"/>
    <property type="match status" value="1"/>
</dbReference>
<dbReference type="HAMAP" id="MF_00508">
    <property type="entry name" value="Ribosomal_uS10"/>
    <property type="match status" value="1"/>
</dbReference>
<dbReference type="InterPro" id="IPR001848">
    <property type="entry name" value="Ribosomal_uS10"/>
</dbReference>
<dbReference type="InterPro" id="IPR018268">
    <property type="entry name" value="Ribosomal_uS10_CS"/>
</dbReference>
<dbReference type="InterPro" id="IPR027486">
    <property type="entry name" value="Ribosomal_uS10_dom"/>
</dbReference>
<dbReference type="InterPro" id="IPR036838">
    <property type="entry name" value="Ribosomal_uS10_dom_sf"/>
</dbReference>
<dbReference type="NCBIfam" id="NF001861">
    <property type="entry name" value="PRK00596.1"/>
    <property type="match status" value="1"/>
</dbReference>
<dbReference type="NCBIfam" id="TIGR01049">
    <property type="entry name" value="rpsJ_bact"/>
    <property type="match status" value="1"/>
</dbReference>
<dbReference type="PANTHER" id="PTHR11700">
    <property type="entry name" value="30S RIBOSOMAL PROTEIN S10 FAMILY MEMBER"/>
    <property type="match status" value="1"/>
</dbReference>
<dbReference type="Pfam" id="PF00338">
    <property type="entry name" value="Ribosomal_S10"/>
    <property type="match status" value="1"/>
</dbReference>
<dbReference type="PRINTS" id="PR00971">
    <property type="entry name" value="RIBOSOMALS10"/>
</dbReference>
<dbReference type="SMART" id="SM01403">
    <property type="entry name" value="Ribosomal_S10"/>
    <property type="match status" value="1"/>
</dbReference>
<dbReference type="SUPFAM" id="SSF54999">
    <property type="entry name" value="Ribosomal protein S10"/>
    <property type="match status" value="1"/>
</dbReference>
<dbReference type="PROSITE" id="PS00361">
    <property type="entry name" value="RIBOSOMAL_S10"/>
    <property type="match status" value="1"/>
</dbReference>